<accession>B7VK24</accession>
<feature type="chain" id="PRO_1000149893" description="Cell division protein ZapD">
    <location>
        <begin position="1"/>
        <end position="246"/>
    </location>
</feature>
<evidence type="ECO:0000255" key="1">
    <source>
        <dbReference type="HAMAP-Rule" id="MF_01092"/>
    </source>
</evidence>
<proteinExistence type="inferred from homology"/>
<organism>
    <name type="scientific">Vibrio atlanticus (strain LGP32)</name>
    <name type="common">Vibrio splendidus (strain Mel32)</name>
    <dbReference type="NCBI Taxonomy" id="575788"/>
    <lineage>
        <taxon>Bacteria</taxon>
        <taxon>Pseudomonadati</taxon>
        <taxon>Pseudomonadota</taxon>
        <taxon>Gammaproteobacteria</taxon>
        <taxon>Vibrionales</taxon>
        <taxon>Vibrionaceae</taxon>
        <taxon>Vibrio</taxon>
    </lineage>
</organism>
<keyword id="KW-0131">Cell cycle</keyword>
<keyword id="KW-0132">Cell division</keyword>
<keyword id="KW-0963">Cytoplasm</keyword>
<keyword id="KW-0717">Septation</keyword>
<comment type="function">
    <text evidence="1">Cell division factor that enhances FtsZ-ring assembly. Directly interacts with FtsZ and promotes bundling of FtsZ protofilaments, with a reduction in FtsZ GTPase activity.</text>
</comment>
<comment type="subunit">
    <text evidence="1">Interacts with FtsZ.</text>
</comment>
<comment type="subcellular location">
    <subcellularLocation>
        <location evidence="1">Cytoplasm</location>
    </subcellularLocation>
    <text evidence="1">Localizes to mid-cell in an FtsZ-dependent manner.</text>
</comment>
<comment type="similarity">
    <text evidence="1">Belongs to the ZapD family.</text>
</comment>
<reference key="1">
    <citation type="submission" date="2009-02" db="EMBL/GenBank/DDBJ databases">
        <title>Vibrio splendidus str. LGP32 complete genome.</title>
        <authorList>
            <person name="Mazel D."/>
            <person name="Le Roux F."/>
        </authorList>
    </citation>
    <scope>NUCLEOTIDE SEQUENCE [LARGE SCALE GENOMIC DNA]</scope>
    <source>
        <strain>LGP32</strain>
    </source>
</reference>
<dbReference type="EMBL" id="FM954972">
    <property type="protein sequence ID" value="CAV19727.1"/>
    <property type="molecule type" value="Genomic_DNA"/>
</dbReference>
<dbReference type="SMR" id="B7VK24"/>
<dbReference type="STRING" id="575788.VS_2553"/>
<dbReference type="KEGG" id="vsp:VS_2553"/>
<dbReference type="PATRIC" id="fig|575788.5.peg.3812"/>
<dbReference type="eggNOG" id="COG4582">
    <property type="taxonomic scope" value="Bacteria"/>
</dbReference>
<dbReference type="HOGENOM" id="CLU_076303_0_0_6"/>
<dbReference type="Proteomes" id="UP000009100">
    <property type="component" value="Chromosome 1"/>
</dbReference>
<dbReference type="GO" id="GO:0032153">
    <property type="term" value="C:cell division site"/>
    <property type="evidence" value="ECO:0007669"/>
    <property type="project" value="TreeGrafter"/>
</dbReference>
<dbReference type="GO" id="GO:0005737">
    <property type="term" value="C:cytoplasm"/>
    <property type="evidence" value="ECO:0007669"/>
    <property type="project" value="UniProtKB-SubCell"/>
</dbReference>
<dbReference type="GO" id="GO:0000917">
    <property type="term" value="P:division septum assembly"/>
    <property type="evidence" value="ECO:0007669"/>
    <property type="project" value="UniProtKB-KW"/>
</dbReference>
<dbReference type="GO" id="GO:0043093">
    <property type="term" value="P:FtsZ-dependent cytokinesis"/>
    <property type="evidence" value="ECO:0007669"/>
    <property type="project" value="UniProtKB-UniRule"/>
</dbReference>
<dbReference type="Gene3D" id="1.10.3900.10">
    <property type="entry name" value="YacF-like"/>
    <property type="match status" value="1"/>
</dbReference>
<dbReference type="Gene3D" id="2.60.440.10">
    <property type="entry name" value="YacF-like domains"/>
    <property type="match status" value="1"/>
</dbReference>
<dbReference type="HAMAP" id="MF_01092">
    <property type="entry name" value="ZapD"/>
    <property type="match status" value="1"/>
</dbReference>
<dbReference type="InterPro" id="IPR009777">
    <property type="entry name" value="ZapD"/>
</dbReference>
<dbReference type="InterPro" id="IPR027462">
    <property type="entry name" value="ZapD_C"/>
</dbReference>
<dbReference type="InterPro" id="IPR036268">
    <property type="entry name" value="ZapD_sf"/>
</dbReference>
<dbReference type="NCBIfam" id="NF003655">
    <property type="entry name" value="PRK05287.1-3"/>
    <property type="match status" value="1"/>
</dbReference>
<dbReference type="PANTHER" id="PTHR39455">
    <property type="entry name" value="CELL DIVISION PROTEIN ZAPD"/>
    <property type="match status" value="1"/>
</dbReference>
<dbReference type="PANTHER" id="PTHR39455:SF1">
    <property type="entry name" value="CELL DIVISION PROTEIN ZAPD"/>
    <property type="match status" value="1"/>
</dbReference>
<dbReference type="Pfam" id="PF07072">
    <property type="entry name" value="ZapD"/>
    <property type="match status" value="1"/>
</dbReference>
<dbReference type="SUPFAM" id="SSF160950">
    <property type="entry name" value="YacF-like"/>
    <property type="match status" value="1"/>
</dbReference>
<protein>
    <recommendedName>
        <fullName evidence="1">Cell division protein ZapD</fullName>
    </recommendedName>
    <alternativeName>
        <fullName evidence="1">Z ring-associated protein D</fullName>
    </alternativeName>
</protein>
<sequence>MITHKFEHPLNEKTRIYLRVESLLRQLHLSSAFSDAQQYQLFFRSIFDLIEIFEQIQLKSELAKDIEKQRVTYKSWLDVEGVDQEMLTSLLNDISHIYRELMQAERFGQSLKEDRFLSAIRQRFNLPGGSCCFDLPALHYWLHLPLDKRVRDAETWMDSLQPLYEALTLWLKLTRETGHFKDQIARTGFFQSDADEANILRLSIPMQYGAYPMISGHKNRFAIKFMSFETGQACTQDIEFELAICS</sequence>
<name>ZAPD_VIBA3</name>
<gene>
    <name evidence="1" type="primary">zapD</name>
    <name type="ordered locus">VS_2553</name>
</gene>